<evidence type="ECO:0000255" key="1"/>
<evidence type="ECO:0000256" key="2">
    <source>
        <dbReference type="SAM" id="MobiDB-lite"/>
    </source>
</evidence>
<evidence type="ECO:0000269" key="3">
    <source>
    </source>
</evidence>
<evidence type="ECO:0000269" key="4">
    <source>
    </source>
</evidence>
<evidence type="ECO:0000269" key="5">
    <source>
    </source>
</evidence>
<evidence type="ECO:0000269" key="6">
    <source>
    </source>
</evidence>
<evidence type="ECO:0000269" key="7">
    <source>
    </source>
</evidence>
<evidence type="ECO:0000269" key="8">
    <source>
    </source>
</evidence>
<evidence type="ECO:0000269" key="9">
    <source>
    </source>
</evidence>
<evidence type="ECO:0000269" key="10">
    <source>
    </source>
</evidence>
<evidence type="ECO:0000269" key="11">
    <source>
    </source>
</evidence>
<evidence type="ECO:0000305" key="12"/>
<evidence type="ECO:0000305" key="13">
    <source>
    </source>
</evidence>
<evidence type="ECO:0007744" key="14">
    <source>
        <dbReference type="PDB" id="1JR3"/>
    </source>
</evidence>
<evidence type="ECO:0007744" key="15">
    <source>
        <dbReference type="PDB" id="5FKU"/>
    </source>
</evidence>
<evidence type="ECO:0007744" key="16">
    <source>
        <dbReference type="PDB" id="5FKV"/>
    </source>
</evidence>
<evidence type="ECO:0007829" key="17">
    <source>
        <dbReference type="PDB" id="1NJG"/>
    </source>
</evidence>
<evidence type="ECO:0007829" key="18">
    <source>
        <dbReference type="PDB" id="2AYA"/>
    </source>
</evidence>
<evidence type="ECO:0007829" key="19">
    <source>
        <dbReference type="PDB" id="8GIZ"/>
    </source>
</evidence>
<evidence type="ECO:0007829" key="20">
    <source>
        <dbReference type="PDB" id="8GJ0"/>
    </source>
</evidence>
<evidence type="ECO:0007829" key="21">
    <source>
        <dbReference type="PDB" id="8GJ2"/>
    </source>
</evidence>
<evidence type="ECO:0007829" key="22">
    <source>
        <dbReference type="PDB" id="8VAP"/>
    </source>
</evidence>
<protein>
    <recommendedName>
        <fullName>DNA polymerase III subunit tau</fullName>
        <ecNumber>2.7.7.7</ecNumber>
    </recommendedName>
    <alternativeName>
        <fullName>DNA polymerase III subunit gamma</fullName>
    </alternativeName>
</protein>
<proteinExistence type="evidence at protein level"/>
<sequence length="643" mass="71138">MSYQVLARKWRPQTFADVVGQEHVLTALANGLSLGRIHHAYLFSGTRGVGKTSIARLLAKGLNCETGITATPCGVCDNCREIEQGRFVDLIEIDAASRTKVEDTRDLLDNVQYAPARGRFKVYLIDEVHMLSRHSFNALLKTLEEPPEHVKFLLATTDPQKLPVTILSRCLQFHLKALDVEQIRHQLEHILNEEHIAHEPRALQLLARAAEGSLRDALSLTDQAIASGDGQVSTQAVSAMLGTLDDDQALSLVEAMVEANGERVMALINEAAARGIEWEALLVEMLGLLHRIAMVQLSPAALGNDMAAIELRMRELARTIPPTDIQLYYQTLLIGRKELPYAPDRRMGVEMTLLRALAFHPRMPLPEPEVPRQSFAPVAPTAVMTPTQVPPQPQSAPQQAPTVPLPETTSQVLAARQQLQRVQGATKAKKSEPAAATRARPVNNAALERLASVTDRVQARPVPSALEKAPAKKEAYRWKATTPVMQQKEVVATPKALKKALEHEKTPELAAKLAAEAIERDPWAAQVSQLSLPKLVEQVALNAWKEESDNAVCLHLRSSQRHLNNRGAQQKLAEALSMLKGSTVELTIVEDDNPAVRTPLEWRQAIYEEKLAQARESIIADNNIQTLRRFFDAELDEESIRPI</sequence>
<reference key="1">
    <citation type="journal article" date="1986" name="Nucleic Acids Res.">
        <title>The adjacent dnaZ and dnaX genes of Escherichia coli are contained within one continuous open reading frame.</title>
        <authorList>
            <person name="Flower A.M."/>
            <person name="McHenry C.S."/>
        </authorList>
    </citation>
    <scope>NUCLEOTIDE SEQUENCE [GENOMIC DNA]</scope>
    <source>
        <strain>K12 / JM109 / ATCC 53323</strain>
    </source>
</reference>
<reference key="2">
    <citation type="journal article" date="1986" name="Nucleic Acids Res.">
        <title>Nucleotide sequence of the Escherichia coli replication gene dnaZX.</title>
        <authorList>
            <person name="Yin K.-C."/>
            <person name="Blinkowa A.L."/>
            <person name="Walker J.R."/>
        </authorList>
    </citation>
    <scope>NUCLEOTIDE SEQUENCE [GENOMIC DNA]</scope>
</reference>
<reference key="3">
    <citation type="submission" date="1997-01" db="EMBL/GenBank/DDBJ databases">
        <title>Sequence of minutes 4-25 of Escherichia coli.</title>
        <authorList>
            <person name="Chung E."/>
            <person name="Allen E."/>
            <person name="Araujo R."/>
            <person name="Aparicio A.M."/>
            <person name="Davis K."/>
            <person name="Duncan M."/>
            <person name="Federspiel N."/>
            <person name="Hyman R."/>
            <person name="Kalman S."/>
            <person name="Komp C."/>
            <person name="Kurdi O."/>
            <person name="Lew H."/>
            <person name="Lin D."/>
            <person name="Namath A."/>
            <person name="Oefner P."/>
            <person name="Roberts D."/>
            <person name="Schramm S."/>
            <person name="Davis R.W."/>
        </authorList>
    </citation>
    <scope>NUCLEOTIDE SEQUENCE [LARGE SCALE GENOMIC DNA]</scope>
    <source>
        <strain>K12 / MG1655 / ATCC 47076</strain>
    </source>
</reference>
<reference key="4">
    <citation type="journal article" date="1997" name="Science">
        <title>The complete genome sequence of Escherichia coli K-12.</title>
        <authorList>
            <person name="Blattner F.R."/>
            <person name="Plunkett G. III"/>
            <person name="Bloch C.A."/>
            <person name="Perna N.T."/>
            <person name="Burland V."/>
            <person name="Riley M."/>
            <person name="Collado-Vides J."/>
            <person name="Glasner J.D."/>
            <person name="Rode C.K."/>
            <person name="Mayhew G.F."/>
            <person name="Gregor J."/>
            <person name="Davis N.W."/>
            <person name="Kirkpatrick H.A."/>
            <person name="Goeden M.A."/>
            <person name="Rose D.J."/>
            <person name="Mau B."/>
            <person name="Shao Y."/>
        </authorList>
    </citation>
    <scope>NUCLEOTIDE SEQUENCE [LARGE SCALE GENOMIC DNA]</scope>
    <source>
        <strain>K12 / MG1655 / ATCC 47076</strain>
    </source>
</reference>
<reference key="5">
    <citation type="journal article" date="2006" name="Mol. Syst. Biol.">
        <title>Highly accurate genome sequences of Escherichia coli K-12 strains MG1655 and W3110.</title>
        <authorList>
            <person name="Hayashi K."/>
            <person name="Morooka N."/>
            <person name="Yamamoto Y."/>
            <person name="Fujita K."/>
            <person name="Isono K."/>
            <person name="Choi S."/>
            <person name="Ohtsubo E."/>
            <person name="Baba T."/>
            <person name="Wanner B.L."/>
            <person name="Mori H."/>
            <person name="Horiuchi T."/>
        </authorList>
    </citation>
    <scope>NUCLEOTIDE SEQUENCE [LARGE SCALE GENOMIC DNA]</scope>
    <source>
        <strain>K12 / W3110 / ATCC 27325 / DSM 5911</strain>
    </source>
</reference>
<reference key="6">
    <citation type="journal article" date="1988" name="J. Biol. Chem.">
        <title>DNA polymerase III holoenzyme of Escherichia coli. I. Purification and distinctive functions of subunits tau and gamma, the dnaZX gene products.</title>
        <authorList>
            <person name="Maki S."/>
            <person name="Kornberg A."/>
        </authorList>
    </citation>
    <scope>PROTEIN SEQUENCE OF 1-13</scope>
    <source>
        <strain>ATCC 33694 / HB101</strain>
    </source>
</reference>
<reference key="7">
    <citation type="journal article" date="1982" name="J. Biol. Chem.">
        <title>Purification and characterization of DNA polymerase III'. Identification of tau as a subunit of the DNA polymerase III holoenzyme.</title>
        <authorList>
            <person name="McHenry C.S."/>
        </authorList>
    </citation>
    <scope>PROBABLE FUNCTION OF TAU IN DIMERIZATION OF DNA POLYMERASE</scope>
    <source>
        <strain>HMS 83</strain>
    </source>
</reference>
<reference key="8">
    <citation type="journal article" date="1990" name="Proc. Natl. Acad. Sci. U.S.A.">
        <title>Translational frameshifting generates the gamma subunit of DNA polymerase III holoenzyme.</title>
        <authorList>
            <person name="Tsuchihashi Z."/>
            <person name="Kornberg A."/>
        </authorList>
    </citation>
    <scope>RIBOSOMAL FRAMESHIFT</scope>
    <scope>ISOFORMS TAU AND GAMMA</scope>
    <scope>PROTEIN SEQUENCE OF 428-431 (ISOFORM GAMMA)</scope>
</reference>
<reference key="9">
    <citation type="journal article" date="1990" name="Nucleic Acids Res.">
        <title>Programmed ribosomal frameshifting generates the Escherichia coli DNA polymerase III gamma subunit from within the tau subunit reading frame.</title>
        <authorList>
            <person name="Blinkowa A.L."/>
            <person name="Walker J.R."/>
        </authorList>
    </citation>
    <scope>RIBOSOMAL FRAMESHIFT</scope>
    <scope>ISOFORMS TAU AND GAMMA</scope>
    <source>
        <strain>K12 / JM103Y</strain>
    </source>
</reference>
<reference key="10">
    <citation type="journal article" date="1990" name="Proc. Natl. Acad. Sci. U.S.A.">
        <title>The gamma subunit of DNA polymerase III holoenzyme of Escherichia coli is produced by ribosomal frameshifting.</title>
        <authorList>
            <person name="Flower A.M."/>
            <person name="McHenry C.S."/>
        </authorList>
    </citation>
    <scope>RIBOSOMAL FRAMESHIFT</scope>
    <scope>ISOFORMS TAU AND GAMMA</scope>
    <source>
        <strain>K12</strain>
    </source>
</reference>
<reference key="11">
    <citation type="journal article" date="1991" name="J. Biol. Chem.">
        <title>Mechanism of the sliding beta-clamp of DNA polymerase III holoenzyme.</title>
        <authorList>
            <person name="Stukenberg P.T."/>
            <person name="Studwell-Vaughan P.S."/>
            <person name="O'Donnell M."/>
        </authorList>
    </citation>
    <scope>FUNCTION</scope>
    <scope>SUBUNIT</scope>
</reference>
<reference key="12">
    <citation type="journal article" date="1992" name="Bioessays">
        <title>Accessory protein function in the DNA polymerase III holoenzyme from E. coli.</title>
        <authorList>
            <person name="O'Donnell M."/>
        </authorList>
    </citation>
    <scope>REVIEW</scope>
</reference>
<reference key="13">
    <citation type="journal article" date="1997" name="Electrophoresis">
        <title>Escherichia coli proteome analysis using the gene-protein database.</title>
        <authorList>
            <person name="VanBogelen R.A."/>
            <person name="Abshire K.Z."/>
            <person name="Moldover B."/>
            <person name="Olson E.R."/>
            <person name="Neidhardt F.C."/>
        </authorList>
    </citation>
    <scope>IDENTIFICATION BY 2D-GEL</scope>
</reference>
<reference key="14">
    <citation type="journal article" date="1993" name="J. Bacteriol.">
        <title>The Escherichia coli DNA polymerase III holoenzyme contains both products of the dnaX gene, tau and gamma, but only tau is essential.</title>
        <authorList>
            <person name="Blinkova A."/>
            <person name="Hervas C."/>
            <person name="Stukenberg P.T."/>
            <person name="Onrust R."/>
            <person name="O'Donnell M.E."/>
            <person name="Walker J.R."/>
        </authorList>
    </citation>
    <scope>IDENTIFICATION OF TEMPERATURE-SENSITIVE ALLELES</scope>
    <scope>FUNCTION</scope>
    <scope>MUTAGENESIS OF GLY-118 AND GLU-601</scope>
    <source>
        <strain>K12</strain>
    </source>
</reference>
<reference key="15">
    <citation type="journal article" date="1999" name="EMBO J.">
        <title>The internal workings of a DNA polymerase clamp-loading machine.</title>
        <authorList>
            <person name="Turner J."/>
            <person name="Hingorani M.M."/>
            <person name="Kelman Z."/>
            <person name="O'Donnell M."/>
        </authorList>
    </citation>
    <scope>FUNCTION OF GAMMA</scope>
    <scope>SUBUNIT</scope>
</reference>
<reference key="16">
    <citation type="journal article" date="2010" name="Science">
        <title>Stoichiometry and architecture of active DNA replication machinery in Escherichia coli.</title>
        <authorList>
            <person name="Reyes-Lamothe R."/>
            <person name="Sherratt D.J."/>
            <person name="Leake M.C."/>
        </authorList>
    </citation>
    <scope>REPLISOME COMPLEX</scope>
    <scope>SUBUNIT</scope>
</reference>
<reference key="17">
    <citation type="journal article" date="2011" name="Nat. Struct. Mol. Biol.">
        <title>Single-molecule studies reveal the function of a third polymerase in the replisome.</title>
        <authorList>
            <person name="Georgescu R.E."/>
            <person name="Kurth I."/>
            <person name="O'Donnell M.E."/>
        </authorList>
    </citation>
    <scope>REPLISOME COMPLEX</scope>
    <scope>SUBUNIT</scope>
</reference>
<reference evidence="14" key="18">
    <citation type="journal article" date="2001" name="Cell">
        <title>Crystal structure of the processivity clamp loader gamma (gamma) complex of E. coli DNA polymerase III.</title>
        <authorList>
            <person name="Jeruzalmi D."/>
            <person name="O'Donnell M."/>
            <person name="Kuriyan J."/>
        </authorList>
    </citation>
    <scope>X-RAY CRYSTALLOGRAPHY (2.70 ANGSTROMS) OF 1-373 (GAMMA) IN COMPLEX WITH HOLA; HOLB AND ZN(2+)</scope>
</reference>
<reference evidence="15 16" key="19">
    <citation type="journal article" date="2015" name="Elife">
        <title>cryo-EM structures of the E. coli replicative DNA polymerase reveal its dynamic interactions with the DNA sliding clamp, exonuclease and tau.</title>
        <authorList>
            <person name="Fernandez-Leiro R."/>
            <person name="Conrad J."/>
            <person name="Scheres S.H."/>
            <person name="Lamers M.H."/>
        </authorList>
    </citation>
    <scope>STRUCTURE BY ELECTRON MICROSCOPY (8.00 ANGSTROMS) OF 500-643 OF DNAE; DNAN; DNAQ; DNAX WITH AND WITHOUT DNA</scope>
    <scope>SUBUNIT</scope>
</reference>
<name>DPO3X_ECOLI</name>
<organism>
    <name type="scientific">Escherichia coli (strain K12)</name>
    <dbReference type="NCBI Taxonomy" id="83333"/>
    <lineage>
        <taxon>Bacteria</taxon>
        <taxon>Pseudomonadati</taxon>
        <taxon>Pseudomonadota</taxon>
        <taxon>Gammaproteobacteria</taxon>
        <taxon>Enterobacterales</taxon>
        <taxon>Enterobacteriaceae</taxon>
        <taxon>Escherichia</taxon>
    </lineage>
</organism>
<gene>
    <name type="primary">dnaX</name>
    <name type="synonym">dnaZ</name>
    <name type="synonym">dnaZX</name>
    <name type="ordered locus">b0470</name>
    <name type="ordered locus">JW0459</name>
</gene>
<keyword id="KW-0002">3D-structure</keyword>
<keyword id="KW-0067">ATP-binding</keyword>
<keyword id="KW-0903">Direct protein sequencing</keyword>
<keyword id="KW-0235">DNA replication</keyword>
<keyword id="KW-0239">DNA-directed DNA polymerase</keyword>
<keyword id="KW-0479">Metal-binding</keyword>
<keyword id="KW-0547">Nucleotide-binding</keyword>
<keyword id="KW-0548">Nucleotidyltransferase</keyword>
<keyword id="KW-1185">Reference proteome</keyword>
<keyword id="KW-0688">Ribosomal frameshifting</keyword>
<keyword id="KW-0808">Transferase</keyword>
<keyword id="KW-0862">Zinc</keyword>
<comment type="function">
    <text evidence="4">Part of the beta sliding clamp loading complex, which hydrolyzes ATP to load the beta clamp onto primed DNA to form the DNA replication pre-initiation complex (PubMed:2040637). DNA polymerase III is a complex, multichain enzyme responsible for most of the replicative synthesis in bacteria. This DNA polymerase also exhibits 3'-5' exonuclease activity. The gamma complex (gamma(3),delta,delta') is thought to load beta dimers onto DNA by binding ATP which alters the complex's conformation so it can bind beta sliding clamp dimers and open them at one interface. Primed DNA is recognized, ATP is hydrolyzed releasing the gamma complex and closing the beta sliding clamp ring around the primed DNA (PubMed:9927437).</text>
</comment>
<comment type="function">
    <molecule>Isoform tau</molecule>
    <text evidence="13">Serves as a scaffold to trimerize the core complex (PubMed:7037770).</text>
</comment>
<comment type="function">
    <molecule>Isoform gamma</molecule>
    <text evidence="11">Interacts with the delta and delta' subunits to transfer the beta subunit on the DNA (PubMed:9927437). Interacts with ATP, drives ATP-induced conformational changes in the gamma complex that opens the beta sliding clamp ring. After loading of primed DNA ATP is hydrolyzed and the beta sliding clamp ring closes (PubMed:9927437).</text>
</comment>
<comment type="catalytic activity">
    <reaction>
        <text>DNA(n) + a 2'-deoxyribonucleoside 5'-triphosphate = DNA(n+1) + diphosphate</text>
        <dbReference type="Rhea" id="RHEA:22508"/>
        <dbReference type="Rhea" id="RHEA-COMP:17339"/>
        <dbReference type="Rhea" id="RHEA-COMP:17340"/>
        <dbReference type="ChEBI" id="CHEBI:33019"/>
        <dbReference type="ChEBI" id="CHEBI:61560"/>
        <dbReference type="ChEBI" id="CHEBI:173112"/>
        <dbReference type="EC" id="2.7.7.7"/>
    </reaction>
</comment>
<comment type="subunit">
    <text evidence="3 4 5 9 11">The DNA polymerase III holoenzyme complex contains at least 10 different subunits organized into 3 functionally essential subassemblies: the Pol III core, the beta sliding clamp processivity factor and the clamp-loading complex. The Pol III core (subunits alpha, epsilon and theta) contains the polymerase and the 3'-5' exonuclease proofreading activities (PubMed:2040637). The polymerase is tethered to the template via the dimeric beta sliding clamp processivity factor. The clamp-loading complex (also called gamma complex) assembles the beta sliding clamp onto the primed template and plays a central role in the organization and communication at the replication fork. The clamp-loading complex contains delta, delta', psi and chi, and 3 copies of either or both of two different DnaX proteins, gamma and tau. The DNA replisome complex has a single clamp loader (3 tau and 1 each of delta, delta', psi and chi subunits) which binds 3 Pol III cores (1 core on the leading strand and 2 on the lagging strand) each with a beta sliding clamp dimer. Additional proteins in the replisome are other copies of gamma, psi and chi, Ssb, DNA helicase and RNA primase (PubMed:20413500, PubMed:22157955). The clamp loader hydrolyzes ATP to assemble the beta processivity factor onto the primed template (PubMed:2040637, PubMed:9927437) and plays a central role in the organization and communication at the replication fork; the minimal complex to load the beta sliding clamp on DNA is delta, delta', gamma (PubMed:9927437).</text>
</comment>
<comment type="interaction">
    <interactant intactId="EBI-549140">
        <id>P06710</id>
    </interactant>
    <interactant intactId="EBI-545674">
        <id>P11989</id>
        <label>bglG</label>
    </interactant>
    <organismsDiffer>false</organismsDiffer>
    <experiments>3</experiments>
</comment>
<comment type="interaction">
    <interactant intactId="EBI-549140">
        <id>P06710</id>
    </interactant>
    <interactant intactId="EBI-548978">
        <id>P0ACB0</id>
        <label>dnaB</label>
    </interactant>
    <organismsDiffer>false</organismsDiffer>
    <experiments>2</experiments>
</comment>
<comment type="interaction">
    <interactant intactId="EBI-549140">
        <id>P06710</id>
    </interactant>
    <interactant intactId="EBI-549111">
        <id>P10443</id>
        <label>dnaE</label>
    </interactant>
    <organismsDiffer>false</organismsDiffer>
    <experiments>12</experiments>
</comment>
<comment type="interaction">
    <interactant intactId="EBI-549140">
        <id>P06710</id>
    </interactant>
    <interactant intactId="EBI-542385">
        <id>P0A988</id>
        <label>dnaN</label>
    </interactant>
    <organismsDiffer>false</organismsDiffer>
    <experiments>4</experiments>
</comment>
<comment type="interaction">
    <interactant intactId="EBI-549140">
        <id>P06710</id>
    </interactant>
    <interactant intactId="EBI-549131">
        <id>P03007</id>
        <label>dnaQ</label>
    </interactant>
    <organismsDiffer>false</organismsDiffer>
    <experiments>6</experiments>
</comment>
<comment type="interaction">
    <interactant intactId="EBI-549140">
        <id>P06710</id>
    </interactant>
    <interactant intactId="EBI-549140">
        <id>P06710</id>
        <label>dnaX</label>
    </interactant>
    <organismsDiffer>false</organismsDiffer>
    <experiments>9</experiments>
</comment>
<comment type="interaction">
    <interactant intactId="EBI-549140">
        <id>P06710</id>
    </interactant>
    <interactant intactId="EBI-1132602">
        <id>P20605</id>
        <label>fic</label>
    </interactant>
    <organismsDiffer>false</organismsDiffer>
    <experiments>2</experiments>
</comment>
<comment type="interaction">
    <interactant intactId="EBI-549140">
        <id>P06710</id>
    </interactant>
    <interactant intactId="EBI-549153">
        <id>P28630</id>
        <label>holA</label>
    </interactant>
    <organismsDiffer>false</organismsDiffer>
    <experiments>19</experiments>
</comment>
<comment type="interaction">
    <interactant intactId="EBI-549140">
        <id>P06710</id>
    </interactant>
    <interactant intactId="EBI-549161">
        <id>P28631</id>
        <label>holB</label>
    </interactant>
    <organismsDiffer>false</organismsDiffer>
    <experiments>26</experiments>
</comment>
<comment type="interaction">
    <interactant intactId="EBI-549140">
        <id>P06710</id>
    </interactant>
    <interactant intactId="EBI-549169">
        <id>P28905</id>
        <label>holC</label>
    </interactant>
    <organismsDiffer>false</organismsDiffer>
    <experiments>20</experiments>
</comment>
<comment type="interaction">
    <interactant intactId="EBI-549140">
        <id>P06710</id>
    </interactant>
    <interactant intactId="EBI-549176">
        <id>P28632</id>
        <label>holD</label>
    </interactant>
    <organismsDiffer>false</organismsDiffer>
    <experiments>26</experiments>
</comment>
<comment type="interaction">
    <interactant intactId="EBI-549140">
        <id>P06710</id>
    </interactant>
    <interactant intactId="EBI-543771">
        <id>P0A7L0</id>
        <label>rplA</label>
    </interactant>
    <organismsDiffer>false</organismsDiffer>
    <experiments>2</experiments>
</comment>
<comment type="interaction">
    <interactant intactId="EBI-549140">
        <id>P06710</id>
    </interactant>
    <interactant intactId="EBI-1118620">
        <id>P0AGE0</id>
        <label>ssb</label>
    </interactant>
    <organismsDiffer>false</organismsDiffer>
    <experiments>2</experiments>
</comment>
<comment type="interaction">
    <interactant intactId="EBI-6464728">
        <id>P06710-1</id>
    </interactant>
    <interactant intactId="EBI-549153">
        <id>P28630</id>
        <label>holA</label>
    </interactant>
    <organismsDiffer>false</organismsDiffer>
    <experiments>5</experiments>
</comment>
<comment type="interaction">
    <interactant intactId="EBI-6464728">
        <id>P06710-1</id>
    </interactant>
    <interactant intactId="EBI-549161">
        <id>P28631</id>
        <label>holB</label>
    </interactant>
    <organismsDiffer>false</organismsDiffer>
    <experiments>6</experiments>
</comment>
<comment type="interaction">
    <interactant intactId="EBI-2604194">
        <id>P06710-2</id>
    </interactant>
    <interactant intactId="EBI-2604194">
        <id>P06710-2</id>
        <label>dnaX</label>
    </interactant>
    <organismsDiffer>false</organismsDiffer>
    <experiments>2</experiments>
</comment>
<comment type="interaction">
    <interactant intactId="EBI-2604194">
        <id>P06710-2</id>
    </interactant>
    <interactant intactId="EBI-549153">
        <id>P28630</id>
        <label>holA</label>
    </interactant>
    <organismsDiffer>false</organismsDiffer>
    <experiments>6</experiments>
</comment>
<comment type="interaction">
    <interactant intactId="EBI-2604194">
        <id>P06710-2</id>
    </interactant>
    <interactant intactId="EBI-549176">
        <id>P28632</id>
        <label>holD</label>
    </interactant>
    <organismsDiffer>false</organismsDiffer>
    <experiments>2</experiments>
</comment>
<comment type="interaction">
    <interactant intactId="EBI-2604194">
        <id>P06710-2</id>
    </interactant>
    <interactant intactId="EBI-554913">
        <id>P23367</id>
        <label>mutL</label>
    </interactant>
    <organismsDiffer>false</organismsDiffer>
    <experiments>2</experiments>
</comment>
<comment type="alternative products">
    <event type="ribosomal frameshifting"/>
    <isoform>
        <id>P06710-1</id>
        <name>tau</name>
        <sequence type="displayed"/>
    </isoform>
    <isoform>
        <id>P06710-2</id>
        <name>gamma</name>
        <sequence type="described" ref="VSP_042848 VSP_042849"/>
    </isoform>
    <text evidence="6 7 8">The production of the two protein products from this region is due to programmed ribosomal frameshifting. Frameshifting is about 40% efficient.</text>
</comment>
<comment type="miscellaneous">
    <molecule>Isoform tau</molecule>
    <text evidence="10">Produced by full-length translation of the dnaX gene. This isoform is essential, constructs that express only the gamma isoform are not viable (PubMed:8376347).</text>
</comment>
<comment type="miscellaneous">
    <molecule>Isoform gamma</molecule>
    <text evidence="6 7 8 10">Formed by programmed ribosomal frameshifting to a premature stop codon in the -1 frame at codon 430, the last residue is thus Glu and not Ser. Mutants which remove the frameshift are viable, suggesting strongly that gamma is not essential for viability (PubMed:8376347).</text>
</comment>
<comment type="similarity">
    <text evidence="12">Belongs to the DnaX/STICHEL family.</text>
</comment>
<comment type="sequence caution" evidence="12">
    <conflict type="erroneous initiation">
        <sequence resource="EMBL-CDS" id="CAA28175"/>
    </conflict>
    <text>Truncated N-terminus.</text>
</comment>
<accession>P06710</accession>
<accession>A0A385XJC4</accession>
<accession>Q2MBV7</accession>
<accession>Q47721</accession>
<feature type="initiator methionine" description="Removed">
    <location>
        <position position="1"/>
    </location>
</feature>
<feature type="chain" id="PRO_0000007360" description="DNA polymerase III subunit tau">
    <location>
        <begin position="2"/>
        <end position="643"/>
    </location>
</feature>
<feature type="region of interest" description="Disordered" evidence="2">
    <location>
        <begin position="385"/>
        <end position="404"/>
    </location>
</feature>
<feature type="binding site" evidence="1">
    <location>
        <begin position="45"/>
        <end position="52"/>
    </location>
    <ligand>
        <name>ATP</name>
        <dbReference type="ChEBI" id="CHEBI:30616"/>
    </ligand>
</feature>
<feature type="binding site" evidence="3 14">
    <location>
        <position position="64"/>
    </location>
    <ligand>
        <name>Zn(2+)</name>
        <dbReference type="ChEBI" id="CHEBI:29105"/>
    </ligand>
</feature>
<feature type="binding site" evidence="3 14">
    <location>
        <position position="73"/>
    </location>
    <ligand>
        <name>Zn(2+)</name>
        <dbReference type="ChEBI" id="CHEBI:29105"/>
    </ligand>
</feature>
<feature type="binding site" evidence="3 14">
    <location>
        <position position="76"/>
    </location>
    <ligand>
        <name>Zn(2+)</name>
        <dbReference type="ChEBI" id="CHEBI:29105"/>
    </ligand>
</feature>
<feature type="binding site" evidence="3 14">
    <location>
        <position position="79"/>
    </location>
    <ligand>
        <name>Zn(2+)</name>
        <dbReference type="ChEBI" id="CHEBI:29105"/>
    </ligand>
</feature>
<feature type="splice variant" id="VSP_042848" description="In isoform gamma." evidence="12">
    <original>S</original>
    <variation>E</variation>
    <location>
        <position position="431"/>
    </location>
</feature>
<feature type="splice variant" id="VSP_042849" description="In isoform gamma." evidence="12">
    <location>
        <begin position="432"/>
        <end position="643"/>
    </location>
</feature>
<feature type="mutagenesis site" description="In dnaX2016(Ts); present in both isoforms, unable to grow at 42 degrees Celsius." evidence="10">
    <original>G</original>
    <variation>D</variation>
    <location>
        <position position="118"/>
    </location>
</feature>
<feature type="mutagenesis site" description="In dnaX36(Ts); present only in isoform tau, unable to grow at 42 degrees Celsius." evidence="10">
    <original>E</original>
    <variation>K</variation>
    <location>
        <position position="601"/>
    </location>
</feature>
<feature type="helix" evidence="17">
    <location>
        <begin position="6"/>
        <end position="9"/>
    </location>
</feature>
<feature type="helix" evidence="17">
    <location>
        <begin position="15"/>
        <end position="17"/>
    </location>
</feature>
<feature type="helix" evidence="17">
    <location>
        <begin position="22"/>
        <end position="34"/>
    </location>
</feature>
<feature type="strand" evidence="17">
    <location>
        <begin position="39"/>
        <end position="44"/>
    </location>
</feature>
<feature type="strand" evidence="19">
    <location>
        <begin position="45"/>
        <end position="50"/>
    </location>
</feature>
<feature type="helix" evidence="17">
    <location>
        <begin position="51"/>
        <end position="63"/>
    </location>
</feature>
<feature type="helix" evidence="17">
    <location>
        <begin position="77"/>
        <end position="83"/>
    </location>
</feature>
<feature type="strand" evidence="17">
    <location>
        <begin position="88"/>
        <end position="94"/>
    </location>
</feature>
<feature type="turn" evidence="21">
    <location>
        <begin position="95"/>
        <end position="97"/>
    </location>
</feature>
<feature type="helix" evidence="17">
    <location>
        <begin position="98"/>
        <end position="100"/>
    </location>
</feature>
<feature type="helix" evidence="17">
    <location>
        <begin position="101"/>
        <end position="109"/>
    </location>
</feature>
<feature type="strand" evidence="22">
    <location>
        <begin position="110"/>
        <end position="113"/>
    </location>
</feature>
<feature type="strand" evidence="17">
    <location>
        <begin position="116"/>
        <end position="126"/>
    </location>
</feature>
<feature type="helix" evidence="17">
    <location>
        <begin position="128"/>
        <end position="130"/>
    </location>
</feature>
<feature type="helix" evidence="17">
    <location>
        <begin position="133"/>
        <end position="144"/>
    </location>
</feature>
<feature type="strand" evidence="17">
    <location>
        <begin position="150"/>
        <end position="157"/>
    </location>
</feature>
<feature type="helix" evidence="17">
    <location>
        <begin position="159"/>
        <end position="161"/>
    </location>
</feature>
<feature type="helix" evidence="17">
    <location>
        <begin position="164"/>
        <end position="167"/>
    </location>
</feature>
<feature type="strand" evidence="17">
    <location>
        <begin position="170"/>
        <end position="174"/>
    </location>
</feature>
<feature type="helix" evidence="17">
    <location>
        <begin position="180"/>
        <end position="193"/>
    </location>
</feature>
<feature type="helix" evidence="17">
    <location>
        <begin position="200"/>
        <end position="210"/>
    </location>
</feature>
<feature type="helix" evidence="17">
    <location>
        <begin position="214"/>
        <end position="225"/>
    </location>
</feature>
<feature type="turn" evidence="17">
    <location>
        <begin position="226"/>
        <end position="229"/>
    </location>
</feature>
<feature type="strand" evidence="17">
    <location>
        <begin position="230"/>
        <end position="232"/>
    </location>
</feature>
<feature type="helix" evidence="17">
    <location>
        <begin position="234"/>
        <end position="240"/>
    </location>
</feature>
<feature type="helix" evidence="21">
    <location>
        <begin position="248"/>
        <end position="257"/>
    </location>
</feature>
<feature type="helix" evidence="21">
    <location>
        <begin position="261"/>
        <end position="273"/>
    </location>
</feature>
<feature type="helix" evidence="21">
    <location>
        <begin position="278"/>
        <end position="297"/>
    </location>
</feature>
<feature type="helix" evidence="21">
    <location>
        <begin position="299"/>
        <end position="301"/>
    </location>
</feature>
<feature type="helix" evidence="21">
    <location>
        <begin position="304"/>
        <end position="306"/>
    </location>
</feature>
<feature type="helix" evidence="20">
    <location>
        <begin position="307"/>
        <end position="309"/>
    </location>
</feature>
<feature type="helix" evidence="21">
    <location>
        <begin position="310"/>
        <end position="319"/>
    </location>
</feature>
<feature type="helix" evidence="21">
    <location>
        <begin position="322"/>
        <end position="338"/>
    </location>
</feature>
<feature type="helix" evidence="21">
    <location>
        <begin position="339"/>
        <end position="341"/>
    </location>
</feature>
<feature type="strand" evidence="22">
    <location>
        <begin position="342"/>
        <end position="344"/>
    </location>
</feature>
<feature type="helix" evidence="21">
    <location>
        <begin position="345"/>
        <end position="358"/>
    </location>
</feature>
<feature type="strand" evidence="21">
    <location>
        <begin position="359"/>
        <end position="361"/>
    </location>
</feature>
<feature type="helix" evidence="18">
    <location>
        <begin position="507"/>
        <end position="520"/>
    </location>
</feature>
<feature type="helix" evidence="18">
    <location>
        <begin position="522"/>
        <end position="530"/>
    </location>
</feature>
<feature type="helix" evidence="18">
    <location>
        <begin position="535"/>
        <end position="541"/>
    </location>
</feature>
<feature type="strand" evidence="18">
    <location>
        <begin position="543"/>
        <end position="547"/>
    </location>
</feature>
<feature type="strand" evidence="18">
    <location>
        <begin position="549"/>
        <end position="556"/>
    </location>
</feature>
<feature type="helix" evidence="18">
    <location>
        <begin position="558"/>
        <end position="560"/>
    </location>
</feature>
<feature type="turn" evidence="18">
    <location>
        <begin position="561"/>
        <end position="563"/>
    </location>
</feature>
<feature type="helix" evidence="18">
    <location>
        <begin position="566"/>
        <end position="580"/>
    </location>
</feature>
<feature type="strand" evidence="18">
    <location>
        <begin position="585"/>
        <end position="590"/>
    </location>
</feature>
<feature type="helix" evidence="18">
    <location>
        <begin position="599"/>
        <end position="620"/>
    </location>
</feature>
<dbReference type="EC" id="2.7.7.7"/>
<dbReference type="EMBL" id="X04487">
    <property type="protein sequence ID" value="CAA28174.1"/>
    <property type="molecule type" value="Genomic_DNA"/>
</dbReference>
<dbReference type="EMBL" id="X04487">
    <property type="protein sequence ID" value="CAA28175.1"/>
    <property type="status" value="ALT_INIT"/>
    <property type="molecule type" value="Genomic_DNA"/>
</dbReference>
<dbReference type="EMBL" id="X04275">
    <property type="protein sequence ID" value="CAA27827.1"/>
    <property type="molecule type" value="Genomic_DNA"/>
</dbReference>
<dbReference type="EMBL" id="U82664">
    <property type="protein sequence ID" value="AAB40224.1"/>
    <property type="molecule type" value="Genomic_DNA"/>
</dbReference>
<dbReference type="EMBL" id="U00096">
    <property type="protein sequence ID" value="AAC73572.1"/>
    <property type="molecule type" value="Genomic_DNA"/>
</dbReference>
<dbReference type="EMBL" id="U00096">
    <property type="protein sequence ID" value="AYC08179.1"/>
    <property type="molecule type" value="Genomic_DNA"/>
</dbReference>
<dbReference type="EMBL" id="AP009048">
    <property type="protein sequence ID" value="BAE76249.1"/>
    <property type="molecule type" value="Genomic_DNA"/>
</dbReference>
<dbReference type="EMBL" id="M38777">
    <property type="protein sequence ID" value="AAA23457.1"/>
    <property type="molecule type" value="Genomic_DNA"/>
</dbReference>
<dbReference type="PIR" id="A25549">
    <property type="entry name" value="DJEC3G"/>
</dbReference>
<dbReference type="RefSeq" id="NP_415003.1">
    <property type="nucleotide sequence ID" value="NC_000913.3"/>
</dbReference>
<dbReference type="RefSeq" id="WP_000122013.1">
    <property type="nucleotide sequence ID" value="NZ_SSUW01000008.1"/>
</dbReference>
<dbReference type="PDB" id="1JR3">
    <property type="method" value="X-ray"/>
    <property type="resolution" value="2.70 A"/>
    <property type="chains" value="A/B/C=1-373"/>
</dbReference>
<dbReference type="PDB" id="1NJF">
    <property type="method" value="X-ray"/>
    <property type="resolution" value="2.30 A"/>
    <property type="chains" value="A/B/C/D=1-243"/>
</dbReference>
<dbReference type="PDB" id="1NJG">
    <property type="method" value="X-ray"/>
    <property type="resolution" value="2.20 A"/>
    <property type="chains" value="A/B=1-243"/>
</dbReference>
<dbReference type="PDB" id="1XXH">
    <property type="method" value="X-ray"/>
    <property type="resolution" value="3.45 A"/>
    <property type="chains" value="B/C/D/G/H/I=1-373"/>
</dbReference>
<dbReference type="PDB" id="1XXI">
    <property type="method" value="X-ray"/>
    <property type="resolution" value="4.10 A"/>
    <property type="chains" value="B/C/D/G/H/I=1-368"/>
</dbReference>
<dbReference type="PDB" id="2AYA">
    <property type="method" value="NMR"/>
    <property type="chains" value="A=499-625"/>
</dbReference>
<dbReference type="PDB" id="3GLF">
    <property type="method" value="X-ray"/>
    <property type="resolution" value="3.39 A"/>
    <property type="chains" value="B/C/D/G/H/I=1-373"/>
</dbReference>
<dbReference type="PDB" id="3GLG">
    <property type="method" value="X-ray"/>
    <property type="resolution" value="3.25 A"/>
    <property type="chains" value="B/C/D/G/H/I=1-373"/>
</dbReference>
<dbReference type="PDB" id="3GLH">
    <property type="method" value="X-ray"/>
    <property type="resolution" value="3.89 A"/>
    <property type="chains" value="B/C/D/G/H/I/L/M/N=1-373"/>
</dbReference>
<dbReference type="PDB" id="3GLI">
    <property type="method" value="X-ray"/>
    <property type="resolution" value="3.50 A"/>
    <property type="chains" value="B/C/D/G/H/I=1-373"/>
</dbReference>
<dbReference type="PDB" id="5FKU">
    <property type="method" value="EM"/>
    <property type="resolution" value="8.34 A"/>
    <property type="chains" value="E=500-643"/>
</dbReference>
<dbReference type="PDB" id="5FKV">
    <property type="method" value="EM"/>
    <property type="resolution" value="8.00 A"/>
    <property type="chains" value="E=500-643"/>
</dbReference>
<dbReference type="PDB" id="8GIY">
    <property type="method" value="EM"/>
    <property type="resolution" value="3.70 A"/>
    <property type="chains" value="B/C/D=1-430"/>
</dbReference>
<dbReference type="PDB" id="8GIZ">
    <property type="method" value="EM"/>
    <property type="resolution" value="2.70 A"/>
    <property type="chains" value="B/C/D=1-430"/>
</dbReference>
<dbReference type="PDB" id="8GJ0">
    <property type="method" value="EM"/>
    <property type="resolution" value="2.90 A"/>
    <property type="chains" value="B/C/D=1-643"/>
</dbReference>
<dbReference type="PDB" id="8GJ1">
    <property type="method" value="EM"/>
    <property type="resolution" value="3.00 A"/>
    <property type="chains" value="B/C/D=1-643"/>
</dbReference>
<dbReference type="PDB" id="8GJ2">
    <property type="method" value="EM"/>
    <property type="resolution" value="2.60 A"/>
    <property type="chains" value="B/C/D=1-643"/>
</dbReference>
<dbReference type="PDB" id="8GJ3">
    <property type="method" value="EM"/>
    <property type="resolution" value="2.80 A"/>
    <property type="chains" value="B/C/D=1-643"/>
</dbReference>
<dbReference type="PDB" id="8VAL">
    <property type="method" value="EM"/>
    <property type="resolution" value="3.70 A"/>
    <property type="chains" value="B/C/D=1-373"/>
</dbReference>
<dbReference type="PDB" id="8VAM">
    <property type="method" value="EM"/>
    <property type="resolution" value="3.90 A"/>
    <property type="chains" value="B/C/D=1-373"/>
</dbReference>
<dbReference type="PDB" id="8VAN">
    <property type="method" value="EM"/>
    <property type="resolution" value="7.70 A"/>
    <property type="chains" value="B/C/D=1-373"/>
</dbReference>
<dbReference type="PDB" id="8VAP">
    <property type="method" value="EM"/>
    <property type="resolution" value="3.00 A"/>
    <property type="chains" value="B/C/D=1-373"/>
</dbReference>
<dbReference type="PDB" id="8VAQ">
    <property type="method" value="EM"/>
    <property type="resolution" value="3.80 A"/>
    <property type="chains" value="B/C/D=1-373"/>
</dbReference>
<dbReference type="PDB" id="8VAR">
    <property type="method" value="EM"/>
    <property type="resolution" value="3.90 A"/>
    <property type="chains" value="B/C/D=1-373"/>
</dbReference>
<dbReference type="PDB" id="8VAS">
    <property type="method" value="EM"/>
    <property type="resolution" value="3.80 A"/>
    <property type="chains" value="B/C/D=1-373"/>
</dbReference>
<dbReference type="PDB" id="8VAT">
    <property type="method" value="EM"/>
    <property type="resolution" value="3.20 A"/>
    <property type="chains" value="B/C/D=1-373"/>
</dbReference>
<dbReference type="PDBsum" id="1JR3"/>
<dbReference type="PDBsum" id="1NJF"/>
<dbReference type="PDBsum" id="1NJG"/>
<dbReference type="PDBsum" id="1XXH"/>
<dbReference type="PDBsum" id="1XXI"/>
<dbReference type="PDBsum" id="2AYA"/>
<dbReference type="PDBsum" id="3GLF"/>
<dbReference type="PDBsum" id="3GLG"/>
<dbReference type="PDBsum" id="3GLH"/>
<dbReference type="PDBsum" id="3GLI"/>
<dbReference type="PDBsum" id="5FKU"/>
<dbReference type="PDBsum" id="5FKV"/>
<dbReference type="PDBsum" id="8GIY"/>
<dbReference type="PDBsum" id="8GIZ"/>
<dbReference type="PDBsum" id="8GJ0"/>
<dbReference type="PDBsum" id="8GJ1"/>
<dbReference type="PDBsum" id="8GJ2"/>
<dbReference type="PDBsum" id="8GJ3"/>
<dbReference type="PDBsum" id="8VAL"/>
<dbReference type="PDBsum" id="8VAM"/>
<dbReference type="PDBsum" id="8VAN"/>
<dbReference type="PDBsum" id="8VAP"/>
<dbReference type="PDBsum" id="8VAQ"/>
<dbReference type="PDBsum" id="8VAR"/>
<dbReference type="PDBsum" id="8VAS"/>
<dbReference type="PDBsum" id="8VAT"/>
<dbReference type="BMRB" id="P06710"/>
<dbReference type="EMDB" id="EMD-3198"/>
<dbReference type="EMDB" id="EMD-3201"/>
<dbReference type="EMDB" id="EMD-40079"/>
<dbReference type="EMDB" id="EMD-40080"/>
<dbReference type="EMDB" id="EMD-40081"/>
<dbReference type="EMDB" id="EMD-40082"/>
<dbReference type="EMDB" id="EMD-40083"/>
<dbReference type="EMDB" id="EMD-40084"/>
<dbReference type="EMDB" id="EMD-43094"/>
<dbReference type="EMDB" id="EMD-43095"/>
<dbReference type="EMDB" id="EMD-43096"/>
<dbReference type="EMDB" id="EMD-43098"/>
<dbReference type="EMDB" id="EMD-43099"/>
<dbReference type="EMDB" id="EMD-43100"/>
<dbReference type="EMDB" id="EMD-43101"/>
<dbReference type="EMDB" id="EMD-43102"/>
<dbReference type="SMR" id="P06710"/>
<dbReference type="BioGRID" id="4259846">
    <property type="interactions" value="147"/>
</dbReference>
<dbReference type="BioGRID" id="849494">
    <property type="interactions" value="14"/>
</dbReference>
<dbReference type="ComplexPortal" id="CPX-1926">
    <property type="entry name" value="DNA polymerase III clamp loader complex"/>
</dbReference>
<dbReference type="DIP" id="DIP-9464N"/>
<dbReference type="FunCoup" id="P06710">
    <property type="interactions" value="202"/>
</dbReference>
<dbReference type="IntAct" id="P06710">
    <property type="interactions" value="33"/>
</dbReference>
<dbReference type="STRING" id="511145.b0470"/>
<dbReference type="BindingDB" id="P06710"/>
<dbReference type="DrugBank" id="DB02930">
    <property type="generic name" value="Adenosine 5'-[gamma-thio]triphosphate"/>
</dbReference>
<dbReference type="jPOST" id="P06710"/>
<dbReference type="PaxDb" id="511145-b0470"/>
<dbReference type="EnsemblBacteria" id="AAC73572">
    <property type="protein sequence ID" value="AAC73572"/>
    <property type="gene ID" value="b0470"/>
</dbReference>
<dbReference type="EnsemblBacteria" id="AYC08179">
    <property type="protein sequence ID" value="AYC08179"/>
    <property type="gene ID" value="b0470"/>
</dbReference>
<dbReference type="GeneID" id="945105"/>
<dbReference type="KEGG" id="ecj:JW0459"/>
<dbReference type="KEGG" id="eco:b0470"/>
<dbReference type="KEGG" id="ecoc:C3026_02310"/>
<dbReference type="PATRIC" id="fig|1411691.4.peg.1806"/>
<dbReference type="EchoBASE" id="EB0241"/>
<dbReference type="eggNOG" id="COG2812">
    <property type="taxonomic scope" value="Bacteria"/>
</dbReference>
<dbReference type="HOGENOM" id="CLU_006229_6_0_6"/>
<dbReference type="InParanoid" id="P06710"/>
<dbReference type="OMA" id="YALHQGN"/>
<dbReference type="OrthoDB" id="9810148at2"/>
<dbReference type="PhylomeDB" id="P06710"/>
<dbReference type="BRENDA" id="3.6.4.B8">
    <property type="organism ID" value="2026"/>
</dbReference>
<dbReference type="EvolutionaryTrace" id="P06710"/>
<dbReference type="PRO" id="PR:P06710"/>
<dbReference type="Proteomes" id="UP000000625">
    <property type="component" value="Chromosome"/>
</dbReference>
<dbReference type="GO" id="GO:0009360">
    <property type="term" value="C:DNA polymerase III complex"/>
    <property type="evidence" value="ECO:0000303"/>
    <property type="project" value="ComplexPortal"/>
</dbReference>
<dbReference type="GO" id="GO:0043846">
    <property type="term" value="C:DNA polymerase III, clamp loader complex"/>
    <property type="evidence" value="ECO:0000314"/>
    <property type="project" value="EcoliWiki"/>
</dbReference>
<dbReference type="GO" id="GO:0030894">
    <property type="term" value="C:replisome"/>
    <property type="evidence" value="ECO:0000303"/>
    <property type="project" value="ComplexPortal"/>
</dbReference>
<dbReference type="GO" id="GO:0005524">
    <property type="term" value="F:ATP binding"/>
    <property type="evidence" value="ECO:0007669"/>
    <property type="project" value="UniProtKB-KW"/>
</dbReference>
<dbReference type="GO" id="GO:0016887">
    <property type="term" value="F:ATP hydrolysis activity"/>
    <property type="evidence" value="ECO:0000314"/>
    <property type="project" value="EcoliWiki"/>
</dbReference>
<dbReference type="GO" id="GO:0003677">
    <property type="term" value="F:DNA binding"/>
    <property type="evidence" value="ECO:0007669"/>
    <property type="project" value="InterPro"/>
</dbReference>
<dbReference type="GO" id="GO:0003689">
    <property type="term" value="F:DNA clamp loader activity"/>
    <property type="evidence" value="ECO:0000314"/>
    <property type="project" value="EcoCyc"/>
</dbReference>
<dbReference type="GO" id="GO:0030337">
    <property type="term" value="F:DNA polymerase processivity factor activity"/>
    <property type="evidence" value="ECO:0000314"/>
    <property type="project" value="EcoliWiki"/>
</dbReference>
<dbReference type="GO" id="GO:0003887">
    <property type="term" value="F:DNA-directed DNA polymerase activity"/>
    <property type="evidence" value="ECO:0007669"/>
    <property type="project" value="UniProtKB-KW"/>
</dbReference>
<dbReference type="GO" id="GO:0042802">
    <property type="term" value="F:identical protein binding"/>
    <property type="evidence" value="ECO:0000353"/>
    <property type="project" value="IntAct"/>
</dbReference>
<dbReference type="GO" id="GO:0046872">
    <property type="term" value="F:metal ion binding"/>
    <property type="evidence" value="ECO:0007669"/>
    <property type="project" value="UniProtKB-KW"/>
</dbReference>
<dbReference type="GO" id="GO:0017111">
    <property type="term" value="F:ribonucleoside triphosphate phosphatase activity"/>
    <property type="evidence" value="ECO:0000314"/>
    <property type="project" value="EcoliWiki"/>
</dbReference>
<dbReference type="GO" id="GO:0006260">
    <property type="term" value="P:DNA replication"/>
    <property type="evidence" value="ECO:0000315"/>
    <property type="project" value="EcoliWiki"/>
</dbReference>
<dbReference type="GO" id="GO:0006261">
    <property type="term" value="P:DNA-templated DNA replication"/>
    <property type="evidence" value="ECO:0000314"/>
    <property type="project" value="EcoCyc"/>
</dbReference>
<dbReference type="GO" id="GO:0075523">
    <property type="term" value="P:viral translational frameshifting"/>
    <property type="evidence" value="ECO:0007669"/>
    <property type="project" value="UniProtKB-KW"/>
</dbReference>
<dbReference type="CDD" id="cd00009">
    <property type="entry name" value="AAA"/>
    <property type="match status" value="1"/>
</dbReference>
<dbReference type="CDD" id="cd18137">
    <property type="entry name" value="HLD_clamp_pol_III_gamma_tau"/>
    <property type="match status" value="1"/>
</dbReference>
<dbReference type="FunFam" id="1.10.8.60:FF:000013">
    <property type="entry name" value="DNA polymerase III subunit gamma/tau"/>
    <property type="match status" value="1"/>
</dbReference>
<dbReference type="FunFam" id="1.20.272.10:FF:000003">
    <property type="entry name" value="DNA polymerase III subunit gamma/tau"/>
    <property type="match status" value="1"/>
</dbReference>
<dbReference type="FunFam" id="3.30.300.150:FF:000001">
    <property type="entry name" value="DNA polymerase III subunit gamma/tau"/>
    <property type="match status" value="1"/>
</dbReference>
<dbReference type="FunFam" id="3.40.50.300:FF:000014">
    <property type="entry name" value="DNA polymerase III subunit gamma/tau"/>
    <property type="match status" value="1"/>
</dbReference>
<dbReference type="Gene3D" id="1.10.8.60">
    <property type="match status" value="1"/>
</dbReference>
<dbReference type="Gene3D" id="1.20.272.10">
    <property type="match status" value="1"/>
</dbReference>
<dbReference type="Gene3D" id="3.30.300.150">
    <property type="entry name" value="DNA polymerase III, tau subunit, domain V"/>
    <property type="match status" value="1"/>
</dbReference>
<dbReference type="Gene3D" id="3.40.50.300">
    <property type="entry name" value="P-loop containing nucleotide triphosphate hydrolases"/>
    <property type="match status" value="1"/>
</dbReference>
<dbReference type="InterPro" id="IPR003593">
    <property type="entry name" value="AAA+_ATPase"/>
</dbReference>
<dbReference type="InterPro" id="IPR001270">
    <property type="entry name" value="ClpA/B"/>
</dbReference>
<dbReference type="InterPro" id="IPR008921">
    <property type="entry name" value="DNA_pol3_clamp-load_cplx_C"/>
</dbReference>
<dbReference type="InterPro" id="IPR022001">
    <property type="entry name" value="DNA_pol3_tau_IV"/>
</dbReference>
<dbReference type="InterPro" id="IPR022754">
    <property type="entry name" value="DNA_pol_III_gamma-3"/>
</dbReference>
<dbReference type="InterPro" id="IPR012763">
    <property type="entry name" value="DNA_pol_III_sug/sutau_N"/>
</dbReference>
<dbReference type="InterPro" id="IPR021029">
    <property type="entry name" value="DNA_pol_III_tau_dom-5"/>
</dbReference>
<dbReference type="InterPro" id="IPR050238">
    <property type="entry name" value="DNA_Rep/Repair_Clamp_Loader"/>
</dbReference>
<dbReference type="InterPro" id="IPR045085">
    <property type="entry name" value="HLD_clamp_pol_III_gamma_tau"/>
</dbReference>
<dbReference type="InterPro" id="IPR027417">
    <property type="entry name" value="P-loop_NTPase"/>
</dbReference>
<dbReference type="InterPro" id="IPR038249">
    <property type="entry name" value="PolIII_tau_V_sf"/>
</dbReference>
<dbReference type="NCBIfam" id="TIGR02397">
    <property type="entry name" value="dnaX_nterm"/>
    <property type="match status" value="1"/>
</dbReference>
<dbReference type="NCBIfam" id="NF004046">
    <property type="entry name" value="PRK05563.1"/>
    <property type="match status" value="1"/>
</dbReference>
<dbReference type="NCBIfam" id="NF005942">
    <property type="entry name" value="PRK07994.1"/>
    <property type="match status" value="1"/>
</dbReference>
<dbReference type="PANTHER" id="PTHR11669:SF0">
    <property type="entry name" value="PROTEIN STICHEL-LIKE 2"/>
    <property type="match status" value="1"/>
</dbReference>
<dbReference type="PANTHER" id="PTHR11669">
    <property type="entry name" value="REPLICATION FACTOR C / DNA POLYMERASE III GAMMA-TAU SUBUNIT"/>
    <property type="match status" value="1"/>
</dbReference>
<dbReference type="Pfam" id="PF13177">
    <property type="entry name" value="DNA_pol3_delta2"/>
    <property type="match status" value="1"/>
</dbReference>
<dbReference type="Pfam" id="PF12169">
    <property type="entry name" value="DNA_pol3_gamma3"/>
    <property type="match status" value="1"/>
</dbReference>
<dbReference type="Pfam" id="PF12168">
    <property type="entry name" value="DNA_pol3_tau_4"/>
    <property type="match status" value="1"/>
</dbReference>
<dbReference type="Pfam" id="PF12170">
    <property type="entry name" value="DNA_pol3_tau_5"/>
    <property type="match status" value="1"/>
</dbReference>
<dbReference type="Pfam" id="PF22608">
    <property type="entry name" value="DNAX_ATPase_lid"/>
    <property type="match status" value="1"/>
</dbReference>
<dbReference type="PRINTS" id="PR00300">
    <property type="entry name" value="CLPPROTEASEA"/>
</dbReference>
<dbReference type="SMART" id="SM00382">
    <property type="entry name" value="AAA"/>
    <property type="match status" value="1"/>
</dbReference>
<dbReference type="SUPFAM" id="SSF52540">
    <property type="entry name" value="P-loop containing nucleoside triphosphate hydrolases"/>
    <property type="match status" value="1"/>
</dbReference>
<dbReference type="SUPFAM" id="SSF48019">
    <property type="entry name" value="post-AAA+ oligomerization domain-like"/>
    <property type="match status" value="1"/>
</dbReference>